<comment type="function">
    <text>Involved in glucose repression of glucose metabolism genes.</text>
</comment>
<comment type="subcellular location">
    <subcellularLocation>
        <location>Nucleus</location>
    </subcellularLocation>
</comment>
<comment type="similarity">
    <text evidence="3">Belongs to the creA/MIG C2H2-type zinc-finger protein family.</text>
</comment>
<accession>P52288</accession>
<dbReference type="EMBL" id="Z50018">
    <property type="protein sequence ID" value="CAA90321.1"/>
    <property type="molecule type" value="Genomic_DNA"/>
</dbReference>
<dbReference type="SMR" id="P52288"/>
<dbReference type="VEuPathDB" id="FungiDB:KLMA_20059"/>
<dbReference type="GO" id="GO:0005737">
    <property type="term" value="C:cytoplasm"/>
    <property type="evidence" value="ECO:0007669"/>
    <property type="project" value="TreeGrafter"/>
</dbReference>
<dbReference type="GO" id="GO:0005634">
    <property type="term" value="C:nucleus"/>
    <property type="evidence" value="ECO:0007669"/>
    <property type="project" value="UniProtKB-SubCell"/>
</dbReference>
<dbReference type="GO" id="GO:0000978">
    <property type="term" value="F:RNA polymerase II cis-regulatory region sequence-specific DNA binding"/>
    <property type="evidence" value="ECO:0007669"/>
    <property type="project" value="TreeGrafter"/>
</dbReference>
<dbReference type="GO" id="GO:0008270">
    <property type="term" value="F:zinc ion binding"/>
    <property type="evidence" value="ECO:0007669"/>
    <property type="project" value="UniProtKB-KW"/>
</dbReference>
<dbReference type="GO" id="GO:0000433">
    <property type="term" value="P:carbon catabolite repression of transcription from RNA polymerase II promoter by glucose"/>
    <property type="evidence" value="ECO:0007669"/>
    <property type="project" value="TreeGrafter"/>
</dbReference>
<dbReference type="FunFam" id="3.30.160.60:FF:002343">
    <property type="entry name" value="Zinc finger protein 33A"/>
    <property type="match status" value="1"/>
</dbReference>
<dbReference type="Gene3D" id="3.30.160.60">
    <property type="entry name" value="Classic Zinc Finger"/>
    <property type="match status" value="2"/>
</dbReference>
<dbReference type="InterPro" id="IPR051007">
    <property type="entry name" value="creA/MIG_C2H2-ZnF"/>
</dbReference>
<dbReference type="InterPro" id="IPR036236">
    <property type="entry name" value="Znf_C2H2_sf"/>
</dbReference>
<dbReference type="InterPro" id="IPR013087">
    <property type="entry name" value="Znf_C2H2_type"/>
</dbReference>
<dbReference type="PANTHER" id="PTHR47428">
    <property type="entry name" value="REGULATORY PROTEIN MIG1-RELATED"/>
    <property type="match status" value="1"/>
</dbReference>
<dbReference type="PANTHER" id="PTHR47428:SF1">
    <property type="entry name" value="REGULATORY PROTEIN MIG1-RELATED"/>
    <property type="match status" value="1"/>
</dbReference>
<dbReference type="Pfam" id="PF00096">
    <property type="entry name" value="zf-C2H2"/>
    <property type="match status" value="2"/>
</dbReference>
<dbReference type="SMART" id="SM00355">
    <property type="entry name" value="ZnF_C2H2"/>
    <property type="match status" value="2"/>
</dbReference>
<dbReference type="SUPFAM" id="SSF57667">
    <property type="entry name" value="beta-beta-alpha zinc fingers"/>
    <property type="match status" value="1"/>
</dbReference>
<dbReference type="PROSITE" id="PS00028">
    <property type="entry name" value="ZINC_FINGER_C2H2_1"/>
    <property type="match status" value="2"/>
</dbReference>
<dbReference type="PROSITE" id="PS50157">
    <property type="entry name" value="ZINC_FINGER_C2H2_2"/>
    <property type="match status" value="2"/>
</dbReference>
<evidence type="ECO:0000255" key="1">
    <source>
        <dbReference type="PROSITE-ProRule" id="PRU00042"/>
    </source>
</evidence>
<evidence type="ECO:0000256" key="2">
    <source>
        <dbReference type="SAM" id="MobiDB-lite"/>
    </source>
</evidence>
<evidence type="ECO:0000305" key="3"/>
<name>MIG1_KLUMA</name>
<protein>
    <recommendedName>
        <fullName>Regulatory protein MIG1</fullName>
    </recommendedName>
</protein>
<sequence length="543" mass="59315">MSSEVVPLQKKGRKKAGAGVVVDGEKDGSRPYMCPICHRGFHRLEHQTRHIRTHTGERPHACDFPGCAKRFSRSDELTRHRRIHDSDKPKGKRGRKKKSETIAREKELELQRQRQQQQLQQQQQQQLQQQQHQVLPAEIKISAPMASSMMEVTQAINQRYQDTHNLSLSYNSGSNSNASSGSNSNSSLNQVFSITSQPARDLAAKPMFQLGSDESEETSNTTTLHSVHSQQQNNGSVELLLNAARFESEKSTTLLNNNTPSFKFIDRPPLTSSLSSPALSLVSQSPVAGAGPGFGPANGNGNGAANNNGLLLPRPTSRPKLSALSTLKRMTPLSQVSEPQQPAASLPHLQQVSSNGFLDTNGHAASVARNKSWTNLGVMPSPSESGSSALVSRFSSSASLNKLMDPSSRTSSAVSIATLMNEDKLQSQDDLSVVDEFGRSRKKSKTSTPIRRPSSNMGFGTGPASHAMEFCNELQSRLKSVDQYSDRSAGDEKDYYFQSRSSSSVCTPINSPPSERLVSSTSNNKTIKLPSLRSLDILPREQH</sequence>
<reference key="1">
    <citation type="journal article" date="1997" name="Mol. Gen. Genet.">
        <title>Comparative analysis in three fungi reveals structurally and functionally conserved regions in the Mig1 repressor.</title>
        <authorList>
            <person name="Cassart J.-P."/>
            <person name="Oestling J."/>
            <person name="Ronne H."/>
            <person name="Vandenhaute J."/>
        </authorList>
    </citation>
    <scope>NUCLEOTIDE SEQUENCE [GENOMIC DNA]</scope>
    <source>
        <strain>ATCC 12424 / NRRL Y-610</strain>
    </source>
</reference>
<proteinExistence type="inferred from homology"/>
<feature type="chain" id="PRO_0000046880" description="Regulatory protein MIG1">
    <location>
        <begin position="1"/>
        <end position="543"/>
    </location>
</feature>
<feature type="zinc finger region" description="C2H2-type 1" evidence="1">
    <location>
        <begin position="32"/>
        <end position="54"/>
    </location>
</feature>
<feature type="zinc finger region" description="C2H2-type 2" evidence="1">
    <location>
        <begin position="60"/>
        <end position="84"/>
    </location>
</feature>
<feature type="region of interest" description="Disordered" evidence="2">
    <location>
        <begin position="1"/>
        <end position="28"/>
    </location>
</feature>
<feature type="region of interest" description="Disordered" evidence="2">
    <location>
        <begin position="73"/>
        <end position="102"/>
    </location>
</feature>
<feature type="region of interest" description="Disordered" evidence="2">
    <location>
        <begin position="167"/>
        <end position="187"/>
    </location>
</feature>
<feature type="region of interest" description="Disordered" evidence="2">
    <location>
        <begin position="212"/>
        <end position="233"/>
    </location>
</feature>
<feature type="region of interest" description="Disordered" evidence="2">
    <location>
        <begin position="292"/>
        <end position="318"/>
    </location>
</feature>
<feature type="region of interest" description="Disordered" evidence="2">
    <location>
        <begin position="437"/>
        <end position="464"/>
    </location>
</feature>
<feature type="region of interest" description="Disordered" evidence="2">
    <location>
        <begin position="482"/>
        <end position="525"/>
    </location>
</feature>
<feature type="compositionally biased region" description="Basic and acidic residues" evidence="2">
    <location>
        <begin position="73"/>
        <end position="89"/>
    </location>
</feature>
<feature type="compositionally biased region" description="Polar residues" evidence="2">
    <location>
        <begin position="224"/>
        <end position="233"/>
    </location>
</feature>
<feature type="compositionally biased region" description="Gly residues" evidence="2">
    <location>
        <begin position="292"/>
        <end position="302"/>
    </location>
</feature>
<feature type="compositionally biased region" description="Low complexity" evidence="2">
    <location>
        <begin position="303"/>
        <end position="313"/>
    </location>
</feature>
<feature type="compositionally biased region" description="Polar residues" evidence="2">
    <location>
        <begin position="446"/>
        <end position="458"/>
    </location>
</feature>
<feature type="compositionally biased region" description="Basic and acidic residues" evidence="2">
    <location>
        <begin position="484"/>
        <end position="495"/>
    </location>
</feature>
<feature type="compositionally biased region" description="Polar residues" evidence="2">
    <location>
        <begin position="498"/>
        <end position="525"/>
    </location>
</feature>
<keyword id="KW-0119">Carbohydrate metabolism</keyword>
<keyword id="KW-0238">DNA-binding</keyword>
<keyword id="KW-0479">Metal-binding</keyword>
<keyword id="KW-0539">Nucleus</keyword>
<keyword id="KW-0677">Repeat</keyword>
<keyword id="KW-0678">Repressor</keyword>
<keyword id="KW-0804">Transcription</keyword>
<keyword id="KW-0805">Transcription regulation</keyword>
<keyword id="KW-0862">Zinc</keyword>
<keyword id="KW-0863">Zinc-finger</keyword>
<organism>
    <name type="scientific">Kluyveromyces marxianus</name>
    <name type="common">Yeast</name>
    <name type="synonym">Candida kefyr</name>
    <dbReference type="NCBI Taxonomy" id="4911"/>
    <lineage>
        <taxon>Eukaryota</taxon>
        <taxon>Fungi</taxon>
        <taxon>Dikarya</taxon>
        <taxon>Ascomycota</taxon>
        <taxon>Saccharomycotina</taxon>
        <taxon>Saccharomycetes</taxon>
        <taxon>Saccharomycetales</taxon>
        <taxon>Saccharomycetaceae</taxon>
        <taxon>Kluyveromyces</taxon>
    </lineage>
</organism>
<gene>
    <name type="primary">MIG1</name>
</gene>